<organism>
    <name type="scientific">Aliivibrio salmonicida (strain LFI1238)</name>
    <name type="common">Vibrio salmonicida (strain LFI1238)</name>
    <dbReference type="NCBI Taxonomy" id="316275"/>
    <lineage>
        <taxon>Bacteria</taxon>
        <taxon>Pseudomonadati</taxon>
        <taxon>Pseudomonadota</taxon>
        <taxon>Gammaproteobacteria</taxon>
        <taxon>Vibrionales</taxon>
        <taxon>Vibrionaceae</taxon>
        <taxon>Aliivibrio</taxon>
    </lineage>
</organism>
<reference key="1">
    <citation type="journal article" date="2008" name="BMC Genomics">
        <title>The genome sequence of the fish pathogen Aliivibrio salmonicida strain LFI1238 shows extensive evidence of gene decay.</title>
        <authorList>
            <person name="Hjerde E."/>
            <person name="Lorentzen M.S."/>
            <person name="Holden M.T."/>
            <person name="Seeger K."/>
            <person name="Paulsen S."/>
            <person name="Bason N."/>
            <person name="Churcher C."/>
            <person name="Harris D."/>
            <person name="Norbertczak H."/>
            <person name="Quail M.A."/>
            <person name="Sanders S."/>
            <person name="Thurston S."/>
            <person name="Parkhill J."/>
            <person name="Willassen N.P."/>
            <person name="Thomson N.R."/>
        </authorList>
    </citation>
    <scope>NUCLEOTIDE SEQUENCE [LARGE SCALE GENOMIC DNA]</scope>
    <source>
        <strain>LFI1238</strain>
    </source>
</reference>
<keyword id="KW-0067">ATP-binding</keyword>
<keyword id="KW-0173">Coenzyme A biosynthesis</keyword>
<keyword id="KW-0963">Cytoplasm</keyword>
<keyword id="KW-0460">Magnesium</keyword>
<keyword id="KW-0547">Nucleotide-binding</keyword>
<keyword id="KW-0548">Nucleotidyltransferase</keyword>
<keyword id="KW-0808">Transferase</keyword>
<feature type="chain" id="PRO_1000096758" description="Phosphopantetheine adenylyltransferase">
    <location>
        <begin position="1"/>
        <end position="162"/>
    </location>
</feature>
<feature type="binding site" evidence="1">
    <location>
        <begin position="10"/>
        <end position="11"/>
    </location>
    <ligand>
        <name>ATP</name>
        <dbReference type="ChEBI" id="CHEBI:30616"/>
    </ligand>
</feature>
<feature type="binding site" evidence="1">
    <location>
        <position position="10"/>
    </location>
    <ligand>
        <name>substrate</name>
    </ligand>
</feature>
<feature type="binding site" evidence="1">
    <location>
        <position position="18"/>
    </location>
    <ligand>
        <name>ATP</name>
        <dbReference type="ChEBI" id="CHEBI:30616"/>
    </ligand>
</feature>
<feature type="binding site" evidence="1">
    <location>
        <position position="42"/>
    </location>
    <ligand>
        <name>substrate</name>
    </ligand>
</feature>
<feature type="binding site" evidence="1">
    <location>
        <position position="74"/>
    </location>
    <ligand>
        <name>substrate</name>
    </ligand>
</feature>
<feature type="binding site" evidence="1">
    <location>
        <position position="88"/>
    </location>
    <ligand>
        <name>substrate</name>
    </ligand>
</feature>
<feature type="binding site" evidence="1">
    <location>
        <begin position="89"/>
        <end position="91"/>
    </location>
    <ligand>
        <name>ATP</name>
        <dbReference type="ChEBI" id="CHEBI:30616"/>
    </ligand>
</feature>
<feature type="binding site" evidence="1">
    <location>
        <position position="99"/>
    </location>
    <ligand>
        <name>ATP</name>
        <dbReference type="ChEBI" id="CHEBI:30616"/>
    </ligand>
</feature>
<feature type="binding site" evidence="1">
    <location>
        <begin position="124"/>
        <end position="130"/>
    </location>
    <ligand>
        <name>ATP</name>
        <dbReference type="ChEBI" id="CHEBI:30616"/>
    </ligand>
</feature>
<feature type="site" description="Transition state stabilizer" evidence="1">
    <location>
        <position position="18"/>
    </location>
</feature>
<comment type="function">
    <text evidence="1">Reversibly transfers an adenylyl group from ATP to 4'-phosphopantetheine, yielding dephospho-CoA (dPCoA) and pyrophosphate.</text>
</comment>
<comment type="catalytic activity">
    <reaction evidence="1">
        <text>(R)-4'-phosphopantetheine + ATP + H(+) = 3'-dephospho-CoA + diphosphate</text>
        <dbReference type="Rhea" id="RHEA:19801"/>
        <dbReference type="ChEBI" id="CHEBI:15378"/>
        <dbReference type="ChEBI" id="CHEBI:30616"/>
        <dbReference type="ChEBI" id="CHEBI:33019"/>
        <dbReference type="ChEBI" id="CHEBI:57328"/>
        <dbReference type="ChEBI" id="CHEBI:61723"/>
        <dbReference type="EC" id="2.7.7.3"/>
    </reaction>
</comment>
<comment type="cofactor">
    <cofactor evidence="1">
        <name>Mg(2+)</name>
        <dbReference type="ChEBI" id="CHEBI:18420"/>
    </cofactor>
</comment>
<comment type="pathway">
    <text evidence="1">Cofactor biosynthesis; coenzyme A biosynthesis; CoA from (R)-pantothenate: step 4/5.</text>
</comment>
<comment type="subunit">
    <text evidence="1">Homohexamer.</text>
</comment>
<comment type="subcellular location">
    <subcellularLocation>
        <location evidence="1">Cytoplasm</location>
    </subcellularLocation>
</comment>
<comment type="similarity">
    <text evidence="1">Belongs to the bacterial CoaD family.</text>
</comment>
<name>COAD_ALISL</name>
<accession>B6EPN7</accession>
<dbReference type="EC" id="2.7.7.3" evidence="1"/>
<dbReference type="EMBL" id="FM178379">
    <property type="protein sequence ID" value="CAQ77871.1"/>
    <property type="molecule type" value="Genomic_DNA"/>
</dbReference>
<dbReference type="RefSeq" id="WP_012549066.1">
    <property type="nucleotide sequence ID" value="NC_011312.1"/>
</dbReference>
<dbReference type="SMR" id="B6EPN7"/>
<dbReference type="KEGG" id="vsa:VSAL_I0186"/>
<dbReference type="eggNOG" id="COG0669">
    <property type="taxonomic scope" value="Bacteria"/>
</dbReference>
<dbReference type="HOGENOM" id="CLU_100149_0_1_6"/>
<dbReference type="UniPathway" id="UPA00241">
    <property type="reaction ID" value="UER00355"/>
</dbReference>
<dbReference type="Proteomes" id="UP000001730">
    <property type="component" value="Chromosome 1"/>
</dbReference>
<dbReference type="GO" id="GO:0005737">
    <property type="term" value="C:cytoplasm"/>
    <property type="evidence" value="ECO:0007669"/>
    <property type="project" value="UniProtKB-SubCell"/>
</dbReference>
<dbReference type="GO" id="GO:0005524">
    <property type="term" value="F:ATP binding"/>
    <property type="evidence" value="ECO:0007669"/>
    <property type="project" value="UniProtKB-KW"/>
</dbReference>
<dbReference type="GO" id="GO:0004595">
    <property type="term" value="F:pantetheine-phosphate adenylyltransferase activity"/>
    <property type="evidence" value="ECO:0007669"/>
    <property type="project" value="UniProtKB-UniRule"/>
</dbReference>
<dbReference type="GO" id="GO:0015937">
    <property type="term" value="P:coenzyme A biosynthetic process"/>
    <property type="evidence" value="ECO:0007669"/>
    <property type="project" value="UniProtKB-UniRule"/>
</dbReference>
<dbReference type="CDD" id="cd02163">
    <property type="entry name" value="PPAT"/>
    <property type="match status" value="1"/>
</dbReference>
<dbReference type="FunFam" id="3.40.50.620:FF:000012">
    <property type="entry name" value="Phosphopantetheine adenylyltransferase"/>
    <property type="match status" value="1"/>
</dbReference>
<dbReference type="Gene3D" id="3.40.50.620">
    <property type="entry name" value="HUPs"/>
    <property type="match status" value="1"/>
</dbReference>
<dbReference type="HAMAP" id="MF_00151">
    <property type="entry name" value="PPAT_bact"/>
    <property type="match status" value="1"/>
</dbReference>
<dbReference type="InterPro" id="IPR004821">
    <property type="entry name" value="Cyt_trans-like"/>
</dbReference>
<dbReference type="InterPro" id="IPR001980">
    <property type="entry name" value="PPAT"/>
</dbReference>
<dbReference type="InterPro" id="IPR014729">
    <property type="entry name" value="Rossmann-like_a/b/a_fold"/>
</dbReference>
<dbReference type="NCBIfam" id="TIGR01510">
    <property type="entry name" value="coaD_prev_kdtB"/>
    <property type="match status" value="1"/>
</dbReference>
<dbReference type="NCBIfam" id="TIGR00125">
    <property type="entry name" value="cyt_tran_rel"/>
    <property type="match status" value="1"/>
</dbReference>
<dbReference type="PANTHER" id="PTHR21342">
    <property type="entry name" value="PHOSPHOPANTETHEINE ADENYLYLTRANSFERASE"/>
    <property type="match status" value="1"/>
</dbReference>
<dbReference type="PANTHER" id="PTHR21342:SF1">
    <property type="entry name" value="PHOSPHOPANTETHEINE ADENYLYLTRANSFERASE"/>
    <property type="match status" value="1"/>
</dbReference>
<dbReference type="Pfam" id="PF01467">
    <property type="entry name" value="CTP_transf_like"/>
    <property type="match status" value="1"/>
</dbReference>
<dbReference type="PRINTS" id="PR01020">
    <property type="entry name" value="LPSBIOSNTHSS"/>
</dbReference>
<dbReference type="SUPFAM" id="SSF52374">
    <property type="entry name" value="Nucleotidylyl transferase"/>
    <property type="match status" value="1"/>
</dbReference>
<proteinExistence type="inferred from homology"/>
<sequence length="162" mass="18022">MTKLTLYPGTFDPITNGHLDLIKRSAAMFEHIIVAVAASPSKNTLFTLDERVQLVQEVTQDLPNVSVEGFSGLMVDFARQKQANLLVRGLRTTMDFEYEFGLTSMYRKLMPELESVFLTPSEEYAFLSSTIVREVALHGGSVEAFVPSVVNQALIHKVKSPV</sequence>
<evidence type="ECO:0000255" key="1">
    <source>
        <dbReference type="HAMAP-Rule" id="MF_00151"/>
    </source>
</evidence>
<gene>
    <name evidence="1" type="primary">coaD</name>
    <name type="ordered locus">VSAL_I0186</name>
</gene>
<protein>
    <recommendedName>
        <fullName evidence="1">Phosphopantetheine adenylyltransferase</fullName>
        <ecNumber evidence="1">2.7.7.3</ecNumber>
    </recommendedName>
    <alternativeName>
        <fullName evidence="1">Dephospho-CoA pyrophosphorylase</fullName>
    </alternativeName>
    <alternativeName>
        <fullName evidence="1">Pantetheine-phosphate adenylyltransferase</fullName>
        <shortName evidence="1">PPAT</shortName>
    </alternativeName>
</protein>